<comment type="function">
    <text evidence="1">LuxC is the fatty acid reductase enzyme responsible for synthesis of the aldehyde substrate for the luminescent reaction catalyzed by luciferase.</text>
</comment>
<comment type="catalytic activity">
    <reaction evidence="1">
        <text>a long-chain fatty aldehyde + NADP(+) + CoA = a long-chain fatty acyl-CoA + NADPH + H(+)</text>
        <dbReference type="Rhea" id="RHEA:15437"/>
        <dbReference type="ChEBI" id="CHEBI:15378"/>
        <dbReference type="ChEBI" id="CHEBI:17176"/>
        <dbReference type="ChEBI" id="CHEBI:57287"/>
        <dbReference type="ChEBI" id="CHEBI:57783"/>
        <dbReference type="ChEBI" id="CHEBI:58349"/>
        <dbReference type="ChEBI" id="CHEBI:83139"/>
        <dbReference type="EC" id="1.2.1.50"/>
    </reaction>
</comment>
<comment type="pathway">
    <text>Lipid metabolism; fatty acid reduction for biolumincescence.</text>
</comment>
<comment type="similarity">
    <text evidence="2">Belongs to the LuxC family.</text>
</comment>
<evidence type="ECO:0000250" key="1">
    <source>
        <dbReference type="UniProtKB" id="P19841"/>
    </source>
</evidence>
<evidence type="ECO:0000305" key="2"/>
<keyword id="KW-0455">Luminescence</keyword>
<keyword id="KW-0521">NADP</keyword>
<keyword id="KW-0560">Oxidoreductase</keyword>
<keyword id="KW-1185">Reference proteome</keyword>
<reference key="1">
    <citation type="journal article" date="2003" name="Nat. Biotechnol.">
        <title>The genome sequence of the entomopathogenic bacterium Photorhabdus luminescens.</title>
        <authorList>
            <person name="Duchaud E."/>
            <person name="Rusniok C."/>
            <person name="Frangeul L."/>
            <person name="Buchrieser C."/>
            <person name="Givaudan A."/>
            <person name="Taourit S."/>
            <person name="Bocs S."/>
            <person name="Boursaux-Eude C."/>
            <person name="Chandler M."/>
            <person name="Charles J.-F."/>
            <person name="Dassa E."/>
            <person name="Derose R."/>
            <person name="Derzelle S."/>
            <person name="Freyssinet G."/>
            <person name="Gaudriault S."/>
            <person name="Medigue C."/>
            <person name="Lanois A."/>
            <person name="Powell K."/>
            <person name="Siguier P."/>
            <person name="Vincent R."/>
            <person name="Wingate V."/>
            <person name="Zouine M."/>
            <person name="Glaser P."/>
            <person name="Boemare N."/>
            <person name="Danchin A."/>
            <person name="Kunst F."/>
        </authorList>
    </citation>
    <scope>NUCLEOTIDE SEQUENCE [LARGE SCALE GENOMIC DNA]</scope>
    <source>
        <strain>DSM 15139 / CIP 105565 / TT01</strain>
    </source>
</reference>
<organism>
    <name type="scientific">Photorhabdus laumondii subsp. laumondii (strain DSM 15139 / CIP 105565 / TT01)</name>
    <name type="common">Photorhabdus luminescens subsp. laumondii</name>
    <dbReference type="NCBI Taxonomy" id="243265"/>
    <lineage>
        <taxon>Bacteria</taxon>
        <taxon>Pseudomonadati</taxon>
        <taxon>Pseudomonadota</taxon>
        <taxon>Gammaproteobacteria</taxon>
        <taxon>Enterobacterales</taxon>
        <taxon>Morganellaceae</taxon>
        <taxon>Photorhabdus</taxon>
    </lineage>
</organism>
<name>LUXC_PHOLL</name>
<feature type="chain" id="PRO_0000220198" description="Long-chain acyl-protein thioester reductase">
    <location>
        <begin position="1"/>
        <end position="480"/>
    </location>
</feature>
<accession>Q7N577</accession>
<sequence length="480" mass="54815">MTKKISFIINGQVEIFPESDDLVQSINFGDNSVYLPILNNSHVKNIIDYNENNKLRLHNIVNFLYTVGQRWKNEEYSRRRTYIRDLKKYMGYSEAMAKLEANWISMILCSKGGLYDVVENELGSRHIMDEWLPQDESYIKAFPKGKSIHLLAGNVPLSGIMSILRAILTKNQCIIKTSSTDPFTANALALSFIDVDPNHPITRSLSVVYWPHQGDTSLAKEIMQHMDVIVAWGGEDAINWAVEHAPPYADVIKFGSKKSFCIIDNPVDLTSAATGAAHDICFYDQRACFSAQNIYYMGNQYEEFKLALIEKLNLYAHILPNAKKDFDEKAAYSLVQKESLFAGLKVEVDVHQRWMIIESNAGVEFNQPLGRCVYLHHVDNIEQVLPYVQKNKTQTISIFPWESAFKYRDALALRGAERIVEAGMNNIFRVGGSHDGMRPLQRLVTYISHERPSHYTAKDVAVEIEQTRFLEEDKFLVFVP</sequence>
<dbReference type="EC" id="1.2.1.50" evidence="1"/>
<dbReference type="EMBL" id="BX571866">
    <property type="protein sequence ID" value="CAE14372.1"/>
    <property type="molecule type" value="Genomic_DNA"/>
</dbReference>
<dbReference type="RefSeq" id="WP_011146334.1">
    <property type="nucleotide sequence ID" value="NC_005126.1"/>
</dbReference>
<dbReference type="SMR" id="Q7N577"/>
<dbReference type="STRING" id="243265.plu2079"/>
<dbReference type="GeneID" id="48848355"/>
<dbReference type="KEGG" id="plu:plu2079"/>
<dbReference type="eggNOG" id="COG1012">
    <property type="taxonomic scope" value="Bacteria"/>
</dbReference>
<dbReference type="HOGENOM" id="CLU_567216_0_0_6"/>
<dbReference type="OrthoDB" id="580775at2"/>
<dbReference type="UniPathway" id="UPA00569"/>
<dbReference type="Proteomes" id="UP000002514">
    <property type="component" value="Chromosome"/>
</dbReference>
<dbReference type="GO" id="GO:0003995">
    <property type="term" value="F:acyl-CoA dehydrogenase activity"/>
    <property type="evidence" value="ECO:0007669"/>
    <property type="project" value="InterPro"/>
</dbReference>
<dbReference type="GO" id="GO:0050062">
    <property type="term" value="F:long-chain-fatty-acyl-CoA reductase activity"/>
    <property type="evidence" value="ECO:0007669"/>
    <property type="project" value="UniProtKB-EC"/>
</dbReference>
<dbReference type="GO" id="GO:0008218">
    <property type="term" value="P:bioluminescence"/>
    <property type="evidence" value="ECO:0007669"/>
    <property type="project" value="UniProtKB-KW"/>
</dbReference>
<dbReference type="CDD" id="cd07080">
    <property type="entry name" value="ALDH_Acyl-CoA-Red_LuxC"/>
    <property type="match status" value="1"/>
</dbReference>
<dbReference type="Gene3D" id="3.40.605.10">
    <property type="entry name" value="Aldehyde Dehydrogenase, Chain A, domain 1"/>
    <property type="match status" value="1"/>
</dbReference>
<dbReference type="Gene3D" id="3.40.309.10">
    <property type="entry name" value="Aldehyde Dehydrogenase, Chain A, domain 2"/>
    <property type="match status" value="1"/>
</dbReference>
<dbReference type="InterPro" id="IPR016161">
    <property type="entry name" value="Ald_DH/histidinol_DH"/>
</dbReference>
<dbReference type="InterPro" id="IPR016163">
    <property type="entry name" value="Ald_DH_C"/>
</dbReference>
<dbReference type="InterPro" id="IPR016162">
    <property type="entry name" value="Ald_DH_N"/>
</dbReference>
<dbReference type="InterPro" id="IPR008670">
    <property type="entry name" value="CoA_reduct_LuxC"/>
</dbReference>
<dbReference type="Pfam" id="PF05893">
    <property type="entry name" value="LuxC"/>
    <property type="match status" value="1"/>
</dbReference>
<dbReference type="PIRSF" id="PIRSF009414">
    <property type="entry name" value="LuxC"/>
    <property type="match status" value="1"/>
</dbReference>
<dbReference type="SUPFAM" id="SSF53720">
    <property type="entry name" value="ALDH-like"/>
    <property type="match status" value="1"/>
</dbReference>
<proteinExistence type="inferred from homology"/>
<gene>
    <name type="primary">luxC</name>
    <name type="ordered locus">plu2079</name>
</gene>
<protein>
    <recommendedName>
        <fullName evidence="2">Long-chain acyl-protein thioester reductase</fullName>
        <ecNumber evidence="1">1.2.1.50</ecNumber>
    </recommendedName>
    <alternativeName>
        <fullName>Acyl-CoA reductase</fullName>
    </alternativeName>
</protein>